<comment type="catalytic activity">
    <reaction evidence="1">
        <text>oxaloacetate + acetyl-CoA + H2O = citrate + CoA + H(+)</text>
        <dbReference type="Rhea" id="RHEA:16845"/>
        <dbReference type="ChEBI" id="CHEBI:15377"/>
        <dbReference type="ChEBI" id="CHEBI:15378"/>
        <dbReference type="ChEBI" id="CHEBI:16452"/>
        <dbReference type="ChEBI" id="CHEBI:16947"/>
        <dbReference type="ChEBI" id="CHEBI:57287"/>
        <dbReference type="ChEBI" id="CHEBI:57288"/>
        <dbReference type="EC" id="2.3.3.16"/>
    </reaction>
</comment>
<comment type="pathway">
    <text>Carbohydrate metabolism; tricarboxylic acid cycle; isocitrate from oxaloacetate: step 1/2.</text>
</comment>
<comment type="miscellaneous">
    <text>Citrate synthase is found in nearly all cells capable of oxidative metabolism.</text>
</comment>
<comment type="similarity">
    <text evidence="2">Belongs to the citrate synthase family.</text>
</comment>
<gene>
    <name type="primary">gltA</name>
    <name type="ordered locus">sll0401</name>
</gene>
<protein>
    <recommendedName>
        <fullName>Citrate synthase</fullName>
        <ecNumber>2.3.3.16</ecNumber>
    </recommendedName>
</protein>
<feature type="chain" id="PRO_0000169974" description="Citrate synthase">
    <location>
        <begin position="1"/>
        <end position="397"/>
    </location>
</feature>
<feature type="active site" evidence="1">
    <location>
        <position position="266"/>
    </location>
</feature>
<feature type="active site" evidence="1">
    <location>
        <position position="320"/>
    </location>
</feature>
<accession>Q59977</accession>
<organism>
    <name type="scientific">Synechocystis sp. (strain ATCC 27184 / PCC 6803 / Kazusa)</name>
    <dbReference type="NCBI Taxonomy" id="1111708"/>
    <lineage>
        <taxon>Bacteria</taxon>
        <taxon>Bacillati</taxon>
        <taxon>Cyanobacteriota</taxon>
        <taxon>Cyanophyceae</taxon>
        <taxon>Synechococcales</taxon>
        <taxon>Merismopediaceae</taxon>
        <taxon>Synechocystis</taxon>
    </lineage>
</organism>
<evidence type="ECO:0000255" key="1">
    <source>
        <dbReference type="PROSITE-ProRule" id="PRU10117"/>
    </source>
</evidence>
<evidence type="ECO:0000305" key="2"/>
<sequence>MNYMMTDNEVFKEGLAGVPAAKSRVSHVDGTDGILEYRGIRIEELAKSSSFIEVAYLLIWGKLPTQAEIEEFEYEIRTHRRIKYHIRDMMKCFPETGHPMDALQTSAAALGLFYARRALDDPKYIRAAVVRLLAKIPTMVAAFHMIREGNDPIQPNDKLDYASNFLYMLTEKEPDPFAAKVFDVCLTLHAEHTMNASTFSARVTASTLTDPYAVVASAVGTLAGPLHGGANEEVLNMLEEIGSVENVRPYVEKCLANKQRIMGFGHRVYKVKDPRAIILQDLAEQLFAKMGHDEYYEIAVELEKVVEEYVGQKGIYPNVDFYSGLVYRKLDIPADLFTPLFAIARVAGWLAHWKEQLSVNKIYRPTQIYIGDHNLSYVPMTERVVSVARNEDPNAII</sequence>
<proteinExistence type="inferred from homology"/>
<reference key="1">
    <citation type="journal article" date="1995" name="DNA Res.">
        <title>Sequence analysis of the genome of the unicellular cyanobacterium Synechocystis sp. strain PCC6803. I. Sequence features in the 1 Mb region from map positions 64% to 92% of the genome.</title>
        <authorList>
            <person name="Kaneko T."/>
            <person name="Tanaka A."/>
            <person name="Sato S."/>
            <person name="Kotani H."/>
            <person name="Sazuka T."/>
            <person name="Miyajima N."/>
            <person name="Sugiura M."/>
            <person name="Tabata S."/>
        </authorList>
    </citation>
    <scope>NUCLEOTIDE SEQUENCE [LARGE SCALE GENOMIC DNA]</scope>
    <source>
        <strain>ATCC 27184 / PCC 6803 / N-1</strain>
    </source>
</reference>
<reference key="2">
    <citation type="journal article" date="1996" name="DNA Res.">
        <title>Sequence analysis of the genome of the unicellular cyanobacterium Synechocystis sp. strain PCC6803. II. Sequence determination of the entire genome and assignment of potential protein-coding regions.</title>
        <authorList>
            <person name="Kaneko T."/>
            <person name="Sato S."/>
            <person name="Kotani H."/>
            <person name="Tanaka A."/>
            <person name="Asamizu E."/>
            <person name="Nakamura Y."/>
            <person name="Miyajima N."/>
            <person name="Hirosawa M."/>
            <person name="Sugiura M."/>
            <person name="Sasamoto S."/>
            <person name="Kimura T."/>
            <person name="Hosouchi T."/>
            <person name="Matsuno A."/>
            <person name="Muraki A."/>
            <person name="Nakazaki N."/>
            <person name="Naruo K."/>
            <person name="Okumura S."/>
            <person name="Shimpo S."/>
            <person name="Takeuchi C."/>
            <person name="Wada T."/>
            <person name="Watanabe A."/>
            <person name="Yamada M."/>
            <person name="Yasuda M."/>
            <person name="Tabata S."/>
        </authorList>
    </citation>
    <scope>NUCLEOTIDE SEQUENCE [LARGE SCALE GENOMIC DNA]</scope>
    <source>
        <strain>ATCC 27184 / PCC 6803 / Kazusa</strain>
    </source>
</reference>
<keyword id="KW-1185">Reference proteome</keyword>
<keyword id="KW-0808">Transferase</keyword>
<keyword id="KW-0816">Tricarboxylic acid cycle</keyword>
<name>CISY_SYNY3</name>
<dbReference type="EC" id="2.3.3.16"/>
<dbReference type="EMBL" id="BA000022">
    <property type="protein sequence ID" value="BAA10262.1"/>
    <property type="molecule type" value="Genomic_DNA"/>
</dbReference>
<dbReference type="PIR" id="S74344">
    <property type="entry name" value="S74344"/>
</dbReference>
<dbReference type="SMR" id="Q59977"/>
<dbReference type="FunCoup" id="Q59977">
    <property type="interactions" value="349"/>
</dbReference>
<dbReference type="IntAct" id="Q59977">
    <property type="interactions" value="2"/>
</dbReference>
<dbReference type="STRING" id="1148.gene:10499761"/>
<dbReference type="PaxDb" id="1148-1001122"/>
<dbReference type="EnsemblBacteria" id="BAA10262">
    <property type="protein sequence ID" value="BAA10262"/>
    <property type="gene ID" value="BAA10262"/>
</dbReference>
<dbReference type="KEGG" id="syn:sll0401"/>
<dbReference type="eggNOG" id="COG0372">
    <property type="taxonomic scope" value="Bacteria"/>
</dbReference>
<dbReference type="InParanoid" id="Q59977"/>
<dbReference type="PhylomeDB" id="Q59977"/>
<dbReference type="BRENDA" id="2.3.3.16">
    <property type="organism ID" value="6192"/>
</dbReference>
<dbReference type="UniPathway" id="UPA00223">
    <property type="reaction ID" value="UER00717"/>
</dbReference>
<dbReference type="Proteomes" id="UP000001425">
    <property type="component" value="Chromosome"/>
</dbReference>
<dbReference type="GO" id="GO:0005737">
    <property type="term" value="C:cytoplasm"/>
    <property type="evidence" value="ECO:0007669"/>
    <property type="project" value="InterPro"/>
</dbReference>
<dbReference type="GO" id="GO:0004108">
    <property type="term" value="F:citrate (Si)-synthase activity"/>
    <property type="evidence" value="ECO:0000318"/>
    <property type="project" value="GO_Central"/>
</dbReference>
<dbReference type="GO" id="GO:0005975">
    <property type="term" value="P:carbohydrate metabolic process"/>
    <property type="evidence" value="ECO:0000318"/>
    <property type="project" value="GO_Central"/>
</dbReference>
<dbReference type="GO" id="GO:0006099">
    <property type="term" value="P:tricarboxylic acid cycle"/>
    <property type="evidence" value="ECO:0000318"/>
    <property type="project" value="GO_Central"/>
</dbReference>
<dbReference type="CDD" id="cd06112">
    <property type="entry name" value="citrate_synt_like_1_1"/>
    <property type="match status" value="1"/>
</dbReference>
<dbReference type="FunFam" id="1.10.230.10:FF:000002">
    <property type="entry name" value="Citrate synthase"/>
    <property type="match status" value="1"/>
</dbReference>
<dbReference type="Gene3D" id="1.10.580.10">
    <property type="entry name" value="Citrate Synthase, domain 1"/>
    <property type="match status" value="1"/>
</dbReference>
<dbReference type="Gene3D" id="1.10.230.10">
    <property type="entry name" value="Cytochrome P450-Terp, domain 2"/>
    <property type="match status" value="1"/>
</dbReference>
<dbReference type="InterPro" id="IPR011278">
    <property type="entry name" value="2-MeCitrate/Citrate_synth_II"/>
</dbReference>
<dbReference type="InterPro" id="IPR016142">
    <property type="entry name" value="Citrate_synth-like_lrg_a-sub"/>
</dbReference>
<dbReference type="InterPro" id="IPR016143">
    <property type="entry name" value="Citrate_synth-like_sm_a-sub"/>
</dbReference>
<dbReference type="InterPro" id="IPR002020">
    <property type="entry name" value="Citrate_synthase"/>
</dbReference>
<dbReference type="InterPro" id="IPR019810">
    <property type="entry name" value="Citrate_synthase_AS"/>
</dbReference>
<dbReference type="InterPro" id="IPR024176">
    <property type="entry name" value="Citrate_synthase_bac-typ"/>
</dbReference>
<dbReference type="InterPro" id="IPR036969">
    <property type="entry name" value="Citrate_synthase_sf"/>
</dbReference>
<dbReference type="NCBIfam" id="TIGR01800">
    <property type="entry name" value="cit_synth_II"/>
    <property type="match status" value="1"/>
</dbReference>
<dbReference type="NCBIfam" id="NF010639">
    <property type="entry name" value="PRK14036.1"/>
    <property type="match status" value="1"/>
</dbReference>
<dbReference type="PANTHER" id="PTHR11739">
    <property type="entry name" value="CITRATE SYNTHASE"/>
    <property type="match status" value="1"/>
</dbReference>
<dbReference type="PANTHER" id="PTHR11739:SF4">
    <property type="entry name" value="CITRATE SYNTHASE, PEROXISOMAL"/>
    <property type="match status" value="1"/>
</dbReference>
<dbReference type="Pfam" id="PF00285">
    <property type="entry name" value="Citrate_synt"/>
    <property type="match status" value="1"/>
</dbReference>
<dbReference type="PIRSF" id="PIRSF001369">
    <property type="entry name" value="Citrate_synth"/>
    <property type="match status" value="1"/>
</dbReference>
<dbReference type="PRINTS" id="PR00143">
    <property type="entry name" value="CITRTSNTHASE"/>
</dbReference>
<dbReference type="SUPFAM" id="SSF48256">
    <property type="entry name" value="Citrate synthase"/>
    <property type="match status" value="1"/>
</dbReference>
<dbReference type="PROSITE" id="PS00480">
    <property type="entry name" value="CITRATE_SYNTHASE"/>
    <property type="match status" value="1"/>
</dbReference>